<organism>
    <name type="scientific">Synechococcus sp. (strain RCC307)</name>
    <dbReference type="NCBI Taxonomy" id="316278"/>
    <lineage>
        <taxon>Bacteria</taxon>
        <taxon>Bacillati</taxon>
        <taxon>Cyanobacteriota</taxon>
        <taxon>Cyanophyceae</taxon>
        <taxon>Synechococcales</taxon>
        <taxon>Synechococcaceae</taxon>
        <taxon>Synechococcus</taxon>
    </lineage>
</organism>
<gene>
    <name evidence="1" type="primary">rpsR</name>
    <name evidence="1" type="synonym">rps18</name>
    <name type="ordered locus">SynRCC307_1225</name>
</gene>
<name>RS18_SYNR3</name>
<dbReference type="EMBL" id="CT978603">
    <property type="protein sequence ID" value="CAK28128.1"/>
    <property type="molecule type" value="Genomic_DNA"/>
</dbReference>
<dbReference type="SMR" id="A5GTB9"/>
<dbReference type="STRING" id="316278.SynRCC307_1225"/>
<dbReference type="KEGG" id="syr:SynRCC307_1225"/>
<dbReference type="eggNOG" id="COG0238">
    <property type="taxonomic scope" value="Bacteria"/>
</dbReference>
<dbReference type="HOGENOM" id="CLU_148710_2_3_3"/>
<dbReference type="OrthoDB" id="9812008at2"/>
<dbReference type="Proteomes" id="UP000001115">
    <property type="component" value="Chromosome"/>
</dbReference>
<dbReference type="GO" id="GO:0022627">
    <property type="term" value="C:cytosolic small ribosomal subunit"/>
    <property type="evidence" value="ECO:0007669"/>
    <property type="project" value="TreeGrafter"/>
</dbReference>
<dbReference type="GO" id="GO:0070181">
    <property type="term" value="F:small ribosomal subunit rRNA binding"/>
    <property type="evidence" value="ECO:0007669"/>
    <property type="project" value="TreeGrafter"/>
</dbReference>
<dbReference type="GO" id="GO:0003735">
    <property type="term" value="F:structural constituent of ribosome"/>
    <property type="evidence" value="ECO:0007669"/>
    <property type="project" value="InterPro"/>
</dbReference>
<dbReference type="GO" id="GO:0006412">
    <property type="term" value="P:translation"/>
    <property type="evidence" value="ECO:0007669"/>
    <property type="project" value="UniProtKB-UniRule"/>
</dbReference>
<dbReference type="Gene3D" id="4.10.640.10">
    <property type="entry name" value="Ribosomal protein S18"/>
    <property type="match status" value="1"/>
</dbReference>
<dbReference type="HAMAP" id="MF_00270">
    <property type="entry name" value="Ribosomal_bS18"/>
    <property type="match status" value="1"/>
</dbReference>
<dbReference type="InterPro" id="IPR001648">
    <property type="entry name" value="Ribosomal_bS18"/>
</dbReference>
<dbReference type="InterPro" id="IPR018275">
    <property type="entry name" value="Ribosomal_bS18_CS"/>
</dbReference>
<dbReference type="InterPro" id="IPR036870">
    <property type="entry name" value="Ribosomal_bS18_sf"/>
</dbReference>
<dbReference type="NCBIfam" id="TIGR00165">
    <property type="entry name" value="S18"/>
    <property type="match status" value="1"/>
</dbReference>
<dbReference type="PANTHER" id="PTHR13479">
    <property type="entry name" value="30S RIBOSOMAL PROTEIN S18"/>
    <property type="match status" value="1"/>
</dbReference>
<dbReference type="PANTHER" id="PTHR13479:SF40">
    <property type="entry name" value="SMALL RIBOSOMAL SUBUNIT PROTEIN BS18M"/>
    <property type="match status" value="1"/>
</dbReference>
<dbReference type="Pfam" id="PF01084">
    <property type="entry name" value="Ribosomal_S18"/>
    <property type="match status" value="1"/>
</dbReference>
<dbReference type="PRINTS" id="PR00974">
    <property type="entry name" value="RIBOSOMALS18"/>
</dbReference>
<dbReference type="SUPFAM" id="SSF46911">
    <property type="entry name" value="Ribosomal protein S18"/>
    <property type="match status" value="1"/>
</dbReference>
<dbReference type="PROSITE" id="PS00057">
    <property type="entry name" value="RIBOSOMAL_S18"/>
    <property type="match status" value="1"/>
</dbReference>
<comment type="function">
    <text evidence="1">Binds as a heterodimer with protein bS6 to the central domain of the 16S rRNA, where it helps stabilize the platform of the 30S subunit.</text>
</comment>
<comment type="subunit">
    <text evidence="1">Part of the 30S ribosomal subunit. Forms a tight heterodimer with protein bS6.</text>
</comment>
<comment type="similarity">
    <text evidence="1">Belongs to the bacterial ribosomal protein bS18 family.</text>
</comment>
<reference key="1">
    <citation type="submission" date="2006-05" db="EMBL/GenBank/DDBJ databases">
        <authorList>
            <consortium name="Genoscope"/>
        </authorList>
    </citation>
    <scope>NUCLEOTIDE SEQUENCE [LARGE SCALE GENOMIC DNA]</scope>
    <source>
        <strain>RCC307</strain>
    </source>
</reference>
<protein>
    <recommendedName>
        <fullName evidence="1">Small ribosomal subunit protein bS18</fullName>
    </recommendedName>
    <alternativeName>
        <fullName evidence="2">30S ribosomal protein S18</fullName>
    </alternativeName>
</protein>
<feature type="chain" id="PRO_1000003644" description="Small ribosomal subunit protein bS18">
    <location>
        <begin position="1"/>
        <end position="73"/>
    </location>
</feature>
<sequence length="73" mass="8379">MPPSFFKKRLSPIKPGDPIDYKDTDLLKKFITERGKLLPRRMTGLTARQQRDLTNSVKRARIVALLPFVNPEG</sequence>
<proteinExistence type="inferred from homology"/>
<keyword id="KW-1185">Reference proteome</keyword>
<keyword id="KW-0687">Ribonucleoprotein</keyword>
<keyword id="KW-0689">Ribosomal protein</keyword>
<keyword id="KW-0694">RNA-binding</keyword>
<keyword id="KW-0699">rRNA-binding</keyword>
<evidence type="ECO:0000255" key="1">
    <source>
        <dbReference type="HAMAP-Rule" id="MF_00270"/>
    </source>
</evidence>
<evidence type="ECO:0000305" key="2"/>
<accession>A5GTB9</accession>